<name>PGCB_MOUSE</name>
<feature type="signal peptide" evidence="4">
    <location>
        <begin position="1"/>
        <end position="22"/>
    </location>
</feature>
<feature type="chain" id="PRO_0000017512" description="Brevican core protein">
    <location>
        <begin position="23"/>
        <end position="883"/>
    </location>
</feature>
<feature type="domain" description="Ig-like V-type">
    <location>
        <begin position="35"/>
        <end position="154"/>
    </location>
</feature>
<feature type="domain" description="Link 1" evidence="8">
    <location>
        <begin position="156"/>
        <end position="251"/>
    </location>
</feature>
<feature type="domain" description="Link 2" evidence="8">
    <location>
        <begin position="256"/>
        <end position="353"/>
    </location>
</feature>
<feature type="domain" description="EGF-like" evidence="6">
    <location>
        <begin position="622"/>
        <end position="658"/>
    </location>
</feature>
<feature type="domain" description="C-type lectin" evidence="5">
    <location>
        <begin position="658"/>
        <end position="786"/>
    </location>
</feature>
<feature type="domain" description="Sushi" evidence="7">
    <location>
        <begin position="789"/>
        <end position="849"/>
    </location>
</feature>
<feature type="region of interest" description="Disordered" evidence="9">
    <location>
        <begin position="402"/>
        <end position="592"/>
    </location>
</feature>
<feature type="region of interest" description="Disordered" evidence="9">
    <location>
        <begin position="854"/>
        <end position="883"/>
    </location>
</feature>
<feature type="compositionally biased region" description="Acidic residues" evidence="9">
    <location>
        <begin position="440"/>
        <end position="451"/>
    </location>
</feature>
<feature type="compositionally biased region" description="Acidic residues" evidence="9">
    <location>
        <begin position="459"/>
        <end position="468"/>
    </location>
</feature>
<feature type="compositionally biased region" description="Polar residues" evidence="9">
    <location>
        <begin position="479"/>
        <end position="495"/>
    </location>
</feature>
<feature type="compositionally biased region" description="Basic and acidic residues" evidence="9">
    <location>
        <begin position="581"/>
        <end position="592"/>
    </location>
</feature>
<feature type="modified residue" description="Phosphoserine" evidence="15">
    <location>
        <position position="224"/>
    </location>
</feature>
<feature type="modified residue" description="Phosphoserine" evidence="2">
    <location>
        <position position="413"/>
    </location>
</feature>
<feature type="glycosylation site" description="N-linked (GlcNAc...) asparagine" evidence="4">
    <location>
        <position position="129"/>
    </location>
</feature>
<feature type="glycosylation site" description="N-linked (GlcNAc...) asparagine" evidence="4">
    <location>
        <position position="336"/>
    </location>
</feature>
<feature type="glycosylation site" description="O-linked (Xyl...) (chondroitin sulfate) serine" evidence="3">
    <location>
        <position position="413"/>
    </location>
</feature>
<feature type="disulfide bond" evidence="1">
    <location>
        <begin position="56"/>
        <end position="136"/>
    </location>
</feature>
<feature type="disulfide bond" evidence="1">
    <location>
        <begin position="178"/>
        <end position="249"/>
    </location>
</feature>
<feature type="disulfide bond" evidence="1">
    <location>
        <begin position="202"/>
        <end position="223"/>
    </location>
</feature>
<feature type="disulfide bond" evidence="1">
    <location>
        <begin position="276"/>
        <end position="351"/>
    </location>
</feature>
<feature type="disulfide bond" evidence="1">
    <location>
        <begin position="300"/>
        <end position="321"/>
    </location>
</feature>
<feature type="disulfide bond" evidence="1">
    <location>
        <begin position="626"/>
        <end position="637"/>
    </location>
</feature>
<feature type="disulfide bond" evidence="1">
    <location>
        <begin position="631"/>
        <end position="646"/>
    </location>
</feature>
<feature type="disulfide bond" evidence="1">
    <location>
        <begin position="648"/>
        <end position="657"/>
    </location>
</feature>
<feature type="disulfide bond" evidence="1">
    <location>
        <begin position="664"/>
        <end position="675"/>
    </location>
</feature>
<feature type="disulfide bond" evidence="1">
    <location>
        <begin position="692"/>
        <end position="784"/>
    </location>
</feature>
<feature type="disulfide bond" evidence="1">
    <location>
        <begin position="760"/>
        <end position="776"/>
    </location>
</feature>
<feature type="disulfide bond" evidence="1">
    <location>
        <begin position="791"/>
        <end position="834"/>
    </location>
</feature>
<feature type="disulfide bond" evidence="1">
    <location>
        <begin position="820"/>
        <end position="847"/>
    </location>
</feature>
<feature type="sequence conflict" description="In Ref. 1; CAA60575." evidence="14" ref="1">
    <original>T</original>
    <variation>A</variation>
    <location>
        <position position="42"/>
    </location>
</feature>
<feature type="sequence conflict" description="In Ref. 1; CAA60575." evidence="14" ref="1">
    <original>H</original>
    <variation>R</variation>
    <location>
        <position position="65"/>
    </location>
</feature>
<feature type="sequence conflict" description="In Ref. 1; CAA60575." evidence="14" ref="1">
    <original>G</original>
    <variation>D</variation>
    <location>
        <position position="504"/>
    </location>
</feature>
<feature type="sequence conflict" description="In Ref. 1; CAA60575." evidence="14" ref="1">
    <original>V</original>
    <variation>F</variation>
    <location>
        <position position="514"/>
    </location>
</feature>
<feature type="sequence conflict" description="In Ref. 1; CAA60575." evidence="14" ref="1">
    <original>GSP</original>
    <variation>WSA</variation>
    <location>
        <begin position="528"/>
        <end position="530"/>
    </location>
</feature>
<keyword id="KW-1015">Disulfide bond</keyword>
<keyword id="KW-0245">EGF-like domain</keyword>
<keyword id="KW-0272">Extracellular matrix</keyword>
<keyword id="KW-0325">Glycoprotein</keyword>
<keyword id="KW-0373">Hyaluronic acid</keyword>
<keyword id="KW-0393">Immunoglobulin domain</keyword>
<keyword id="KW-0430">Lectin</keyword>
<keyword id="KW-0597">Phosphoprotein</keyword>
<keyword id="KW-0654">Proteoglycan</keyword>
<keyword id="KW-1185">Reference proteome</keyword>
<keyword id="KW-0677">Repeat</keyword>
<keyword id="KW-0964">Secreted</keyword>
<keyword id="KW-0732">Signal</keyword>
<keyword id="KW-0768">Sushi</keyword>
<comment type="function">
    <text>May play a role in the terminally differentiating and the adult nervous system during postnatal development. Could stabilize interactions between hyaluronan (HA) and brain proteoglycans.</text>
</comment>
<comment type="subunit">
    <text evidence="1">Interacts with TNR.</text>
</comment>
<comment type="subcellular location">
    <subcellularLocation>
        <location evidence="1">Secreted</location>
        <location evidence="1">Extracellular space</location>
        <location evidence="1">Extracellular matrix</location>
    </subcellularLocation>
    <subcellularLocation>
        <location evidence="3">Secreted</location>
    </subcellularLocation>
</comment>
<comment type="tissue specificity">
    <text evidence="10 11 12 13">Expressed in the retina, specifically around the inner and outer segments of photoreceptors, retinal pigment epithelium, outer plexiform layer, and the ganglion cell layer (at protein level) (PubMed:29777959). Brain (PubMed:14550776, PubMed:22121037, PubMed:9286696). Expressed in the brainstem and cerebellum in a perineuronal net pattern (PubMed:14550776, PubMed:22121037).</text>
</comment>
<comment type="PTM">
    <text evidence="3">O-glycosylated; contains chondroitin sulfate.</text>
</comment>
<comment type="similarity">
    <text evidence="14">Belongs to the aggrecan/versican proteoglycan family.</text>
</comment>
<comment type="online information" name="Functional Glycomics Gateway - Glycan Binding">
    <link uri="http://www.functionalglycomics.org/glycomics/GBPServlet?&amp;operationType=view&amp;cbpId=cbp_mou_Ctlect_155"/>
    <text>Brevican</text>
</comment>
<protein>
    <recommendedName>
        <fullName>Brevican core protein</fullName>
    </recommendedName>
</protein>
<accession>Q61361</accession>
<accession>Q80WT7</accession>
<proteinExistence type="evidence at protein level"/>
<organism>
    <name type="scientific">Mus musculus</name>
    <name type="common">Mouse</name>
    <dbReference type="NCBI Taxonomy" id="10090"/>
    <lineage>
        <taxon>Eukaryota</taxon>
        <taxon>Metazoa</taxon>
        <taxon>Chordata</taxon>
        <taxon>Craniata</taxon>
        <taxon>Vertebrata</taxon>
        <taxon>Euteleostomi</taxon>
        <taxon>Mammalia</taxon>
        <taxon>Eutheria</taxon>
        <taxon>Euarchontoglires</taxon>
        <taxon>Glires</taxon>
        <taxon>Rodentia</taxon>
        <taxon>Myomorpha</taxon>
        <taxon>Muroidea</taxon>
        <taxon>Muridae</taxon>
        <taxon>Murinae</taxon>
        <taxon>Mus</taxon>
        <taxon>Mus</taxon>
    </lineage>
</organism>
<sequence length="883" mass="95815">MIPLLLSLLAALVLTQAPAALADDLKEDSSEDRAFRVRIGATQLRGVLGGALAIPCHVHHLRPPHSRRAAPGFPRVKWTFLSGDREVEVLVARGLRVKVNEAYRFRVALPAYPASLTDVSLVLSELRPNDSGVYRCEVQHGIDDSSDAVEVKVKGVVFLYREGSARYAFSFAGAQEACARIGARIATPEQLYAAYLGGYEQCDAGWLSDQTVRYPIQNPREACSGDMDGYPGVRNYGVVGPDDLYDVYCYAEDLNGELFLGAPPSKLTWEEARDYCLERGAQIASTGQLYAAWNGGLDRCSPGWLADGSVRYPIITPSQRCGGGLPGVKTLFLFPNQTGFPSKQNRFNVYCFRDSAHPSASSEASSPASDGLEAIVTVTEKLEELQLPQEAMESESRGAIYSIPISEDGGGGSSTPEDPAEAPRTPLESETQSIAPPTESSEEEGVALEEEERFKDLEALEEEKEQEDLWVWPRELSSPLPTGSETEHSLSQVSPPAQAVLQLGASPSPGPPRVRGPPAETLLPPREGSPTSTPGGAREVGGETGSPELSGVPRESEEAGSSSLEDGPSLLPATWAPVGPRELETPSEEKSGRTVLAGTSVQAQPVLPTDSASHGGVAVAPSSGDCIPSPCHNGGTCLEEKEGFRCLCLPGYGGDLCDVGLHFCSPGWEAFQGACYKHFSTRRSWEEAESQCRALGAHLTSICTPEEQDFVNDRYREYQWIGLNDRTIEGDFLWSDGAPLLYENWNPGQPDSYFLSGENCVVMVWHDQGQWSDVPCNYHLSYTCKMGLVSCGPPPQLPLAQIFGRPRLRYAVDTVLRYRCRDGLAQRNLPLIRCQENGLWEAPQISCVPRRPGRALRSMDAPEGPRGQLSRHRKAPLTPPSSL</sequence>
<dbReference type="EMBL" id="X87096">
    <property type="protein sequence ID" value="CAA60575.1"/>
    <property type="molecule type" value="mRNA"/>
</dbReference>
<dbReference type="EMBL" id="CH466547">
    <property type="protein sequence ID" value="EDL15323.1"/>
    <property type="molecule type" value="Genomic_DNA"/>
</dbReference>
<dbReference type="EMBL" id="BC052032">
    <property type="protein sequence ID" value="AAH52032.1"/>
    <property type="molecule type" value="mRNA"/>
</dbReference>
<dbReference type="CCDS" id="CCDS17462.1"/>
<dbReference type="PIR" id="S57653">
    <property type="entry name" value="S57653"/>
</dbReference>
<dbReference type="RefSeq" id="NP_001103228.1">
    <property type="nucleotide sequence ID" value="NM_001109758.1"/>
</dbReference>
<dbReference type="RefSeq" id="NP_001396470.1">
    <property type="nucleotide sequence ID" value="NM_001409541.1"/>
</dbReference>
<dbReference type="RefSeq" id="NP_001396471.1">
    <property type="nucleotide sequence ID" value="NM_001409542.1"/>
</dbReference>
<dbReference type="RefSeq" id="NP_001396472.1">
    <property type="nucleotide sequence ID" value="NM_001409543.1"/>
</dbReference>
<dbReference type="RefSeq" id="NP_001396474.1">
    <property type="nucleotide sequence ID" value="NM_001409545.1"/>
</dbReference>
<dbReference type="RefSeq" id="NP_031555.2">
    <property type="nucleotide sequence ID" value="NM_007529.3"/>
</dbReference>
<dbReference type="RefSeq" id="XP_006500999.1">
    <property type="nucleotide sequence ID" value="XM_006500936.3"/>
</dbReference>
<dbReference type="RefSeq" id="XP_006501000.1">
    <property type="nucleotide sequence ID" value="XM_006500937.3"/>
</dbReference>
<dbReference type="RefSeq" id="XP_036018756.1">
    <property type="nucleotide sequence ID" value="XM_036162863.1"/>
</dbReference>
<dbReference type="SMR" id="Q61361"/>
<dbReference type="BioGRID" id="198308">
    <property type="interactions" value="3"/>
</dbReference>
<dbReference type="FunCoup" id="Q61361">
    <property type="interactions" value="246"/>
</dbReference>
<dbReference type="IntAct" id="Q61361">
    <property type="interactions" value="2"/>
</dbReference>
<dbReference type="MINT" id="Q61361"/>
<dbReference type="STRING" id="10090.ENSMUSP00000088491"/>
<dbReference type="GlyConnect" id="2161">
    <property type="glycosylation" value="9 N-Linked glycans (2 sites)"/>
</dbReference>
<dbReference type="GlyCosmos" id="Q61361">
    <property type="glycosylation" value="2 sites, 9 glycans"/>
</dbReference>
<dbReference type="GlyGen" id="Q61361">
    <property type="glycosylation" value="5 sites, 11 N-linked glycans (2 sites), 1 O-linked glycan (1 site)"/>
</dbReference>
<dbReference type="iPTMnet" id="Q61361"/>
<dbReference type="PhosphoSitePlus" id="Q61361"/>
<dbReference type="SwissPalm" id="Q61361"/>
<dbReference type="jPOST" id="Q61361"/>
<dbReference type="PaxDb" id="10090-ENSMUSP00000088491"/>
<dbReference type="PeptideAtlas" id="Q61361"/>
<dbReference type="ProteomicsDB" id="288130"/>
<dbReference type="ABCD" id="Q61361">
    <property type="antibodies" value="2 sequenced antibodies"/>
</dbReference>
<dbReference type="Antibodypedia" id="2188">
    <property type="antibodies" value="203 antibodies from 29 providers"/>
</dbReference>
<dbReference type="DNASU" id="12032"/>
<dbReference type="Ensembl" id="ENSMUST00000090971.11">
    <property type="protein sequence ID" value="ENSMUSP00000088491.6"/>
    <property type="gene ID" value="ENSMUSG00000004892.14"/>
</dbReference>
<dbReference type="GeneID" id="12032"/>
<dbReference type="KEGG" id="mmu:12032"/>
<dbReference type="UCSC" id="uc008pto.2">
    <property type="organism name" value="mouse"/>
</dbReference>
<dbReference type="AGR" id="MGI:1096385"/>
<dbReference type="CTD" id="63827"/>
<dbReference type="MGI" id="MGI:1096385">
    <property type="gene designation" value="Bcan"/>
</dbReference>
<dbReference type="VEuPathDB" id="HostDB:ENSMUSG00000004892"/>
<dbReference type="eggNOG" id="KOG4297">
    <property type="taxonomic scope" value="Eukaryota"/>
</dbReference>
<dbReference type="GeneTree" id="ENSGT00940000157343"/>
<dbReference type="HOGENOM" id="CLU_000303_0_0_1"/>
<dbReference type="InParanoid" id="Q61361"/>
<dbReference type="OMA" id="RWEAPQI"/>
<dbReference type="OrthoDB" id="5860362at2759"/>
<dbReference type="PhylomeDB" id="Q61361"/>
<dbReference type="TreeFam" id="TF332134"/>
<dbReference type="Reactome" id="R-MMU-1474228">
    <property type="pathway name" value="Degradation of the extracellular matrix"/>
</dbReference>
<dbReference type="Reactome" id="R-MMU-1971475">
    <property type="pathway name" value="A tetrasaccharide linker sequence is required for GAG synthesis"/>
</dbReference>
<dbReference type="Reactome" id="R-MMU-2022870">
    <property type="pathway name" value="Chondroitin sulfate biosynthesis"/>
</dbReference>
<dbReference type="Reactome" id="R-MMU-2022923">
    <property type="pathway name" value="Dermatan sulfate biosynthesis"/>
</dbReference>
<dbReference type="Reactome" id="R-MMU-2024101">
    <property type="pathway name" value="CS/DS degradation"/>
</dbReference>
<dbReference type="Reactome" id="R-MMU-3000178">
    <property type="pathway name" value="ECM proteoglycans"/>
</dbReference>
<dbReference type="BioGRID-ORCS" id="12032">
    <property type="hits" value="3 hits in 79 CRISPR screens"/>
</dbReference>
<dbReference type="CD-CODE" id="CE726F99">
    <property type="entry name" value="Postsynaptic density"/>
</dbReference>
<dbReference type="ChiTaRS" id="Bcan">
    <property type="organism name" value="mouse"/>
</dbReference>
<dbReference type="PRO" id="PR:Q61361"/>
<dbReference type="Proteomes" id="UP000000589">
    <property type="component" value="Chromosome 3"/>
</dbReference>
<dbReference type="RNAct" id="Q61361">
    <property type="molecule type" value="protein"/>
</dbReference>
<dbReference type="Bgee" id="ENSMUSG00000004892">
    <property type="expression patterns" value="Expressed in superior frontal gyrus and 114 other cell types or tissues"/>
</dbReference>
<dbReference type="ExpressionAtlas" id="Q61361">
    <property type="expression patterns" value="baseline and differential"/>
</dbReference>
<dbReference type="GO" id="GO:0031012">
    <property type="term" value="C:extracellular matrix"/>
    <property type="evidence" value="ECO:0000314"/>
    <property type="project" value="MGI"/>
</dbReference>
<dbReference type="GO" id="GO:0005576">
    <property type="term" value="C:extracellular region"/>
    <property type="evidence" value="ECO:0007669"/>
    <property type="project" value="UniProtKB-SubCell"/>
</dbReference>
<dbReference type="GO" id="GO:0098978">
    <property type="term" value="C:glutamatergic synapse"/>
    <property type="evidence" value="ECO:0000314"/>
    <property type="project" value="SynGO"/>
</dbReference>
<dbReference type="GO" id="GO:0072534">
    <property type="term" value="C:perineuronal net"/>
    <property type="evidence" value="ECO:0000314"/>
    <property type="project" value="UniProtKB"/>
</dbReference>
<dbReference type="GO" id="GO:0005509">
    <property type="term" value="F:calcium ion binding"/>
    <property type="evidence" value="ECO:0007669"/>
    <property type="project" value="InterPro"/>
</dbReference>
<dbReference type="GO" id="GO:0030246">
    <property type="term" value="F:carbohydrate binding"/>
    <property type="evidence" value="ECO:0007669"/>
    <property type="project" value="UniProtKB-KW"/>
</dbReference>
<dbReference type="GO" id="GO:0005540">
    <property type="term" value="F:hyaluronic acid binding"/>
    <property type="evidence" value="ECO:0007669"/>
    <property type="project" value="UniProtKB-KW"/>
</dbReference>
<dbReference type="GO" id="GO:0007155">
    <property type="term" value="P:cell adhesion"/>
    <property type="evidence" value="ECO:0007669"/>
    <property type="project" value="InterPro"/>
</dbReference>
<dbReference type="GO" id="GO:0021766">
    <property type="term" value="P:hippocampus development"/>
    <property type="evidence" value="ECO:0000315"/>
    <property type="project" value="MGI"/>
</dbReference>
<dbReference type="GO" id="GO:0060074">
    <property type="term" value="P:synapse maturation"/>
    <property type="evidence" value="ECO:0000314"/>
    <property type="project" value="SynGO"/>
</dbReference>
<dbReference type="CDD" id="cd00033">
    <property type="entry name" value="CCP"/>
    <property type="match status" value="1"/>
</dbReference>
<dbReference type="CDD" id="cd00054">
    <property type="entry name" value="EGF_CA"/>
    <property type="match status" value="1"/>
</dbReference>
<dbReference type="CDD" id="cd03517">
    <property type="entry name" value="Link_domain_CSPGs_modules_1_3"/>
    <property type="match status" value="1"/>
</dbReference>
<dbReference type="CDD" id="cd03520">
    <property type="entry name" value="Link_domain_CSPGs_modules_2_4"/>
    <property type="match status" value="1"/>
</dbReference>
<dbReference type="FunFam" id="3.10.100.10:FF:000011">
    <property type="entry name" value="Aggrecan core protein"/>
    <property type="match status" value="1"/>
</dbReference>
<dbReference type="FunFam" id="2.60.40.10:FF:000698">
    <property type="entry name" value="brevican core protein"/>
    <property type="match status" value="1"/>
</dbReference>
<dbReference type="FunFam" id="3.10.100.10:FF:000002">
    <property type="entry name" value="Hyaluronan proteoglycan link protein 1"/>
    <property type="match status" value="1"/>
</dbReference>
<dbReference type="FunFam" id="2.10.25.10:FF:000095">
    <property type="entry name" value="Notch, isoform B"/>
    <property type="match status" value="1"/>
</dbReference>
<dbReference type="FunFam" id="2.10.70.10:FF:000003">
    <property type="entry name" value="Versican core protein"/>
    <property type="match status" value="1"/>
</dbReference>
<dbReference type="FunFam" id="3.10.100.10:FF:000003">
    <property type="entry name" value="Versican core protein"/>
    <property type="match status" value="1"/>
</dbReference>
<dbReference type="Gene3D" id="2.10.70.10">
    <property type="entry name" value="Complement Module, domain 1"/>
    <property type="match status" value="1"/>
</dbReference>
<dbReference type="Gene3D" id="2.60.40.10">
    <property type="entry name" value="Immunoglobulins"/>
    <property type="match status" value="1"/>
</dbReference>
<dbReference type="Gene3D" id="2.10.25.10">
    <property type="entry name" value="Laminin"/>
    <property type="match status" value="1"/>
</dbReference>
<dbReference type="Gene3D" id="3.10.100.10">
    <property type="entry name" value="Mannose-Binding Protein A, subunit A"/>
    <property type="match status" value="3"/>
</dbReference>
<dbReference type="InterPro" id="IPR001304">
    <property type="entry name" value="C-type_lectin-like"/>
</dbReference>
<dbReference type="InterPro" id="IPR016186">
    <property type="entry name" value="C-type_lectin-like/link_sf"/>
</dbReference>
<dbReference type="InterPro" id="IPR018378">
    <property type="entry name" value="C-type_lectin_CS"/>
</dbReference>
<dbReference type="InterPro" id="IPR016187">
    <property type="entry name" value="CTDL_fold"/>
</dbReference>
<dbReference type="InterPro" id="IPR001881">
    <property type="entry name" value="EGF-like_Ca-bd_dom"/>
</dbReference>
<dbReference type="InterPro" id="IPR000742">
    <property type="entry name" value="EGF-like_dom"/>
</dbReference>
<dbReference type="InterPro" id="IPR050691">
    <property type="entry name" value="Hyaluronan_bind_Proteoglycan"/>
</dbReference>
<dbReference type="InterPro" id="IPR007110">
    <property type="entry name" value="Ig-like_dom"/>
</dbReference>
<dbReference type="InterPro" id="IPR036179">
    <property type="entry name" value="Ig-like_dom_sf"/>
</dbReference>
<dbReference type="InterPro" id="IPR013783">
    <property type="entry name" value="Ig-like_fold"/>
</dbReference>
<dbReference type="InterPro" id="IPR003006">
    <property type="entry name" value="Ig/MHC_CS"/>
</dbReference>
<dbReference type="InterPro" id="IPR003599">
    <property type="entry name" value="Ig_sub"/>
</dbReference>
<dbReference type="InterPro" id="IPR013106">
    <property type="entry name" value="Ig_V-set"/>
</dbReference>
<dbReference type="InterPro" id="IPR000538">
    <property type="entry name" value="Link_dom"/>
</dbReference>
<dbReference type="InterPro" id="IPR035976">
    <property type="entry name" value="Sushi/SCR/CCP_sf"/>
</dbReference>
<dbReference type="InterPro" id="IPR000436">
    <property type="entry name" value="Sushi_SCR_CCP_dom"/>
</dbReference>
<dbReference type="PANTHER" id="PTHR22804">
    <property type="entry name" value="AGGRECAN/VERSICAN PROTEOGLYCAN"/>
    <property type="match status" value="1"/>
</dbReference>
<dbReference type="PANTHER" id="PTHR22804:SF41">
    <property type="entry name" value="BREVICAN CORE PROTEIN"/>
    <property type="match status" value="1"/>
</dbReference>
<dbReference type="Pfam" id="PF00008">
    <property type="entry name" value="EGF"/>
    <property type="match status" value="1"/>
</dbReference>
<dbReference type="Pfam" id="PF00059">
    <property type="entry name" value="Lectin_C"/>
    <property type="match status" value="1"/>
</dbReference>
<dbReference type="Pfam" id="PF00084">
    <property type="entry name" value="Sushi"/>
    <property type="match status" value="1"/>
</dbReference>
<dbReference type="Pfam" id="PF07686">
    <property type="entry name" value="V-set"/>
    <property type="match status" value="1"/>
</dbReference>
<dbReference type="Pfam" id="PF00193">
    <property type="entry name" value="Xlink"/>
    <property type="match status" value="2"/>
</dbReference>
<dbReference type="PRINTS" id="PR01265">
    <property type="entry name" value="LINKMODULE"/>
</dbReference>
<dbReference type="SMART" id="SM00032">
    <property type="entry name" value="CCP"/>
    <property type="match status" value="1"/>
</dbReference>
<dbReference type="SMART" id="SM00034">
    <property type="entry name" value="CLECT"/>
    <property type="match status" value="1"/>
</dbReference>
<dbReference type="SMART" id="SM00181">
    <property type="entry name" value="EGF"/>
    <property type="match status" value="1"/>
</dbReference>
<dbReference type="SMART" id="SM00179">
    <property type="entry name" value="EGF_CA"/>
    <property type="match status" value="1"/>
</dbReference>
<dbReference type="SMART" id="SM00409">
    <property type="entry name" value="IG"/>
    <property type="match status" value="1"/>
</dbReference>
<dbReference type="SMART" id="SM00406">
    <property type="entry name" value="IGv"/>
    <property type="match status" value="1"/>
</dbReference>
<dbReference type="SMART" id="SM00445">
    <property type="entry name" value="LINK"/>
    <property type="match status" value="2"/>
</dbReference>
<dbReference type="SUPFAM" id="SSF56436">
    <property type="entry name" value="C-type lectin-like"/>
    <property type="match status" value="3"/>
</dbReference>
<dbReference type="SUPFAM" id="SSF57535">
    <property type="entry name" value="Complement control module/SCR domain"/>
    <property type="match status" value="1"/>
</dbReference>
<dbReference type="SUPFAM" id="SSF48726">
    <property type="entry name" value="Immunoglobulin"/>
    <property type="match status" value="1"/>
</dbReference>
<dbReference type="PROSITE" id="PS00615">
    <property type="entry name" value="C_TYPE_LECTIN_1"/>
    <property type="match status" value="1"/>
</dbReference>
<dbReference type="PROSITE" id="PS50041">
    <property type="entry name" value="C_TYPE_LECTIN_2"/>
    <property type="match status" value="1"/>
</dbReference>
<dbReference type="PROSITE" id="PS00022">
    <property type="entry name" value="EGF_1"/>
    <property type="match status" value="1"/>
</dbReference>
<dbReference type="PROSITE" id="PS01186">
    <property type="entry name" value="EGF_2"/>
    <property type="match status" value="1"/>
</dbReference>
<dbReference type="PROSITE" id="PS50026">
    <property type="entry name" value="EGF_3"/>
    <property type="match status" value="1"/>
</dbReference>
<dbReference type="PROSITE" id="PS50835">
    <property type="entry name" value="IG_LIKE"/>
    <property type="match status" value="1"/>
</dbReference>
<dbReference type="PROSITE" id="PS00290">
    <property type="entry name" value="IG_MHC"/>
    <property type="match status" value="1"/>
</dbReference>
<dbReference type="PROSITE" id="PS01241">
    <property type="entry name" value="LINK_1"/>
    <property type="match status" value="2"/>
</dbReference>
<dbReference type="PROSITE" id="PS50963">
    <property type="entry name" value="LINK_2"/>
    <property type="match status" value="2"/>
</dbReference>
<dbReference type="PROSITE" id="PS50923">
    <property type="entry name" value="SUSHI"/>
    <property type="match status" value="1"/>
</dbReference>
<reference key="1">
    <citation type="journal article" date="1997" name="Genomics">
        <title>Sequence and chromosomal localization of the mouse brevican gene.</title>
        <authorList>
            <person name="Rauch U."/>
            <person name="Meyer H."/>
            <person name="Brakebusch C."/>
            <person name="Seidenbecher C."/>
            <person name="Gundelfinger E.D."/>
            <person name="Beier D.R."/>
            <person name="Fassler R."/>
        </authorList>
    </citation>
    <scope>NUCLEOTIDE SEQUENCE [MRNA]</scope>
    <scope>TISSUE SPECIFICITY</scope>
    <source>
        <strain>BALB/cJ</strain>
        <tissue>Brain</tissue>
    </source>
</reference>
<reference key="2">
    <citation type="submission" date="2005-07" db="EMBL/GenBank/DDBJ databases">
        <authorList>
            <person name="Mural R.J."/>
            <person name="Adams M.D."/>
            <person name="Myers E.W."/>
            <person name="Smith H.O."/>
            <person name="Venter J.C."/>
        </authorList>
    </citation>
    <scope>NUCLEOTIDE SEQUENCE [LARGE SCALE GENOMIC DNA]</scope>
</reference>
<reference key="3">
    <citation type="journal article" date="2004" name="Genome Res.">
        <title>The status, quality, and expansion of the NIH full-length cDNA project: the Mammalian Gene Collection (MGC).</title>
        <authorList>
            <consortium name="The MGC Project Team"/>
        </authorList>
    </citation>
    <scope>NUCLEOTIDE SEQUENCE [LARGE SCALE MRNA]</scope>
    <source>
        <strain>C57BL/6J</strain>
        <tissue>Brain</tissue>
    </source>
</reference>
<reference key="4">
    <citation type="journal article" date="2003" name="Mol. Cell. Neurosci.">
        <title>Molecular cloning of Bral2, a novel brain-specific link protein, and immunohistochemical colocalization with brevican in perineuronal nets.</title>
        <authorList>
            <person name="Bekku Y."/>
            <person name="Su W.-D."/>
            <person name="Hirakawa S."/>
            <person name="Faessler R."/>
            <person name="Ohtsuka A."/>
            <person name="Kang J.S."/>
            <person name="Sanders J."/>
            <person name="Murakami T."/>
            <person name="Ninomiya Y."/>
            <person name="Oohashi T."/>
        </authorList>
    </citation>
    <scope>TISSUE SPECIFICITY</scope>
</reference>
<reference key="5">
    <citation type="journal article" date="2007" name="Mol. Cell. Proteomics">
        <title>Qualitative and quantitative analyses of protein phosphorylation in naive and stimulated mouse synaptosomal preparations.</title>
        <authorList>
            <person name="Munton R.P."/>
            <person name="Tweedie-Cullen R."/>
            <person name="Livingstone-Zatchej M."/>
            <person name="Weinandy F."/>
            <person name="Waidelich M."/>
            <person name="Longo D."/>
            <person name="Gehrig P."/>
            <person name="Potthast F."/>
            <person name="Rutishauser D."/>
            <person name="Gerrits B."/>
            <person name="Panse C."/>
            <person name="Schlapbach R."/>
            <person name="Mansuy I.M."/>
        </authorList>
    </citation>
    <scope>IDENTIFICATION BY MASS SPECTROMETRY [LARGE SCALE ANALYSIS]</scope>
    <source>
        <tissue>Brain cortex</tissue>
    </source>
</reference>
<reference key="6">
    <citation type="journal article" date="2010" name="Cell">
        <title>A tissue-specific atlas of mouse protein phosphorylation and expression.</title>
        <authorList>
            <person name="Huttlin E.L."/>
            <person name="Jedrychowski M.P."/>
            <person name="Elias J.E."/>
            <person name="Goswami T."/>
            <person name="Rad R."/>
            <person name="Beausoleil S.A."/>
            <person name="Villen J."/>
            <person name="Haas W."/>
            <person name="Sowa M.E."/>
            <person name="Gygi S.P."/>
        </authorList>
    </citation>
    <scope>PHOSPHORYLATION [LARGE SCALE ANALYSIS] AT SER-224</scope>
    <scope>IDENTIFICATION BY MASS SPECTROMETRY [LARGE SCALE ANALYSIS]</scope>
    <source>
        <tissue>Brain</tissue>
    </source>
</reference>
<reference key="7">
    <citation type="journal article" date="2012" name="J. Comp. Neurol.">
        <title>Bral2 is indispensable for the proper localization of brevican and the structural integrity of the perineuronal net in the brainstem and cerebellum.</title>
        <authorList>
            <person name="Bekku Y."/>
            <person name="Saito M."/>
            <person name="Moser M."/>
            <person name="Fuchigami M."/>
            <person name="Maehara A."/>
            <person name="Nakayama M."/>
            <person name="Kusachi S."/>
            <person name="Ninomiya Y."/>
            <person name="Oohashi T."/>
        </authorList>
    </citation>
    <scope>TISSUE SPECIFICITY</scope>
</reference>
<reference key="8">
    <citation type="journal article" date="2018" name="Acta Biomater.">
        <title>Extracellular matrix component expression in human pluripotent stem cell-derived retinal organoids recapitulates retinogenesis in vivo and reveals an important role for IMPG1 and CD44 in the development of photoreceptors and interphotoreceptor matrix.</title>
        <authorList>
            <person name="Felemban M."/>
            <person name="Dorgau B."/>
            <person name="Hunt N.C."/>
            <person name="Hallam D."/>
            <person name="Zerti D."/>
            <person name="Bauer R."/>
            <person name="Ding Y."/>
            <person name="Collin J."/>
            <person name="Steel D."/>
            <person name="Krasnogor N."/>
            <person name="Al-Aama J."/>
            <person name="Lindsay S."/>
            <person name="Mellough C."/>
            <person name="Lako M."/>
        </authorList>
    </citation>
    <scope>TISSUE SPECIFICITY</scope>
</reference>
<gene>
    <name type="primary">Bcan</name>
</gene>
<evidence type="ECO:0000250" key="1"/>
<evidence type="ECO:0000250" key="2">
    <source>
        <dbReference type="UniProtKB" id="P55068"/>
    </source>
</evidence>
<evidence type="ECO:0000250" key="3">
    <source>
        <dbReference type="UniProtKB" id="Q96GW7"/>
    </source>
</evidence>
<evidence type="ECO:0000255" key="4"/>
<evidence type="ECO:0000255" key="5">
    <source>
        <dbReference type="PROSITE-ProRule" id="PRU00040"/>
    </source>
</evidence>
<evidence type="ECO:0000255" key="6">
    <source>
        <dbReference type="PROSITE-ProRule" id="PRU00076"/>
    </source>
</evidence>
<evidence type="ECO:0000255" key="7">
    <source>
        <dbReference type="PROSITE-ProRule" id="PRU00302"/>
    </source>
</evidence>
<evidence type="ECO:0000255" key="8">
    <source>
        <dbReference type="PROSITE-ProRule" id="PRU00323"/>
    </source>
</evidence>
<evidence type="ECO:0000256" key="9">
    <source>
        <dbReference type="SAM" id="MobiDB-lite"/>
    </source>
</evidence>
<evidence type="ECO:0000269" key="10">
    <source>
    </source>
</evidence>
<evidence type="ECO:0000269" key="11">
    <source>
    </source>
</evidence>
<evidence type="ECO:0000269" key="12">
    <source>
    </source>
</evidence>
<evidence type="ECO:0000269" key="13">
    <source>
    </source>
</evidence>
<evidence type="ECO:0000305" key="14"/>
<evidence type="ECO:0007744" key="15">
    <source>
    </source>
</evidence>